<proteinExistence type="inferred from homology"/>
<protein>
    <recommendedName>
        <fullName>Probable feruloyl esterase C</fullName>
        <ecNumber>3.1.1.73</ecNumber>
    </recommendedName>
    <alternativeName>
        <fullName>Ferulic acid esterase C</fullName>
    </alternativeName>
</protein>
<feature type="signal peptide" evidence="2">
    <location>
        <begin position="1"/>
        <end position="21"/>
    </location>
</feature>
<feature type="chain" id="PRO_0000394938" description="Probable feruloyl esterase C">
    <location>
        <begin position="22"/>
        <end position="270"/>
    </location>
</feature>
<feature type="glycosylation site" description="N-linked (GlcNAc...) asparagine" evidence="2">
    <location>
        <position position="23"/>
    </location>
</feature>
<evidence type="ECO:0000250" key="1"/>
<evidence type="ECO:0000255" key="2"/>
<evidence type="ECO:0000305" key="3"/>
<name>FAEC_ASPFN</name>
<dbReference type="EC" id="3.1.1.73"/>
<dbReference type="EMBL" id="EQ963475">
    <property type="protein sequence ID" value="EED53215.1"/>
    <property type="molecule type" value="Genomic_DNA"/>
</dbReference>
<dbReference type="RefSeq" id="XP_002376461.1">
    <property type="nucleotide sequence ID" value="XM_002376420.1"/>
</dbReference>
<dbReference type="SMR" id="B8N7Z6"/>
<dbReference type="STRING" id="332952.B8N7Z6"/>
<dbReference type="ESTHER" id="aspfn-faec">
    <property type="family name" value="FaeC"/>
</dbReference>
<dbReference type="GlyCosmos" id="B8N7Z6">
    <property type="glycosylation" value="1 site, No reported glycans"/>
</dbReference>
<dbReference type="EnsemblFungi" id="EED53215">
    <property type="protein sequence ID" value="EED53215"/>
    <property type="gene ID" value="AFLA_105900"/>
</dbReference>
<dbReference type="VEuPathDB" id="FungiDB:AFLA_006523"/>
<dbReference type="eggNOG" id="ENOG502SMEI">
    <property type="taxonomic scope" value="Eukaryota"/>
</dbReference>
<dbReference type="HOGENOM" id="CLU_027551_2_0_1"/>
<dbReference type="OMA" id="IHGINDG"/>
<dbReference type="GO" id="GO:0005576">
    <property type="term" value="C:extracellular region"/>
    <property type="evidence" value="ECO:0007669"/>
    <property type="project" value="UniProtKB-SubCell"/>
</dbReference>
<dbReference type="GO" id="GO:0030600">
    <property type="term" value="F:feruloyl esterase activity"/>
    <property type="evidence" value="ECO:0007669"/>
    <property type="project" value="UniProtKB-EC"/>
</dbReference>
<dbReference type="GO" id="GO:0045493">
    <property type="term" value="P:xylan catabolic process"/>
    <property type="evidence" value="ECO:0007669"/>
    <property type="project" value="UniProtKB-KW"/>
</dbReference>
<dbReference type="Gene3D" id="3.40.50.1820">
    <property type="entry name" value="alpha/beta hydrolase"/>
    <property type="match status" value="1"/>
</dbReference>
<dbReference type="InterPro" id="IPR029058">
    <property type="entry name" value="AB_hydrolase_fold"/>
</dbReference>
<dbReference type="InterPro" id="IPR043595">
    <property type="entry name" value="FaeB/C/D"/>
</dbReference>
<dbReference type="InterPro" id="IPR003140">
    <property type="entry name" value="PLipase/COase/thioEstase"/>
</dbReference>
<dbReference type="PANTHER" id="PTHR38050">
    <property type="match status" value="1"/>
</dbReference>
<dbReference type="PANTHER" id="PTHR38050:SF1">
    <property type="entry name" value="FERULOYL ESTERASE C"/>
    <property type="match status" value="1"/>
</dbReference>
<dbReference type="Pfam" id="PF02230">
    <property type="entry name" value="Abhydrolase_2"/>
    <property type="match status" value="1"/>
</dbReference>
<dbReference type="SUPFAM" id="SSF53474">
    <property type="entry name" value="alpha/beta-Hydrolases"/>
    <property type="match status" value="1"/>
</dbReference>
<accession>B8N7Z6</accession>
<keyword id="KW-0119">Carbohydrate metabolism</keyword>
<keyword id="KW-0325">Glycoprotein</keyword>
<keyword id="KW-0378">Hydrolase</keyword>
<keyword id="KW-0624">Polysaccharide degradation</keyword>
<keyword id="KW-0964">Secreted</keyword>
<keyword id="KW-0719">Serine esterase</keyword>
<keyword id="KW-0732">Signal</keyword>
<keyword id="KW-0858">Xylan degradation</keyword>
<comment type="function">
    <text evidence="1">Involved in degradation of plant cell walls. Hydrolyzes the feruloyl-arabinose ester bond in arabinoxylans, and the feruloyl-galactose ester bond in pectin. Active against paranitrophenyl-acetate, methyl ferulate and wheat arabinoxylan (By similarity).</text>
</comment>
<comment type="catalytic activity">
    <reaction>
        <text>feruloyl-polysaccharide + H2O = ferulate + polysaccharide.</text>
        <dbReference type="EC" id="3.1.1.73"/>
    </reaction>
</comment>
<comment type="subcellular location">
    <subcellularLocation>
        <location evidence="1">Secreted</location>
    </subcellularLocation>
</comment>
<comment type="similarity">
    <text evidence="3">Belongs to the faeC family.</text>
</comment>
<reference key="1">
    <citation type="journal article" date="2015" name="Genome Announc.">
        <title>Genome sequence of Aspergillus flavus NRRL 3357, a strain that causes aflatoxin contamination of food and feed.</title>
        <authorList>
            <person name="Nierman W.C."/>
            <person name="Yu J."/>
            <person name="Fedorova-Abrams N.D."/>
            <person name="Losada L."/>
            <person name="Cleveland T.E."/>
            <person name="Bhatnagar D."/>
            <person name="Bennett J.W."/>
            <person name="Dean R."/>
            <person name="Payne G.A."/>
        </authorList>
    </citation>
    <scope>NUCLEOTIDE SEQUENCE [LARGE SCALE GENOMIC DNA]</scope>
    <source>
        <strain>ATCC 200026 / FGSC A1120 / IAM 13836 / NRRL 3357 / JCM 12722 / SRRC 167</strain>
    </source>
</reference>
<organism>
    <name type="scientific">Aspergillus flavus (strain ATCC 200026 / FGSC A1120 / IAM 13836 / NRRL 3357 / JCM 12722 / SRRC 167)</name>
    <dbReference type="NCBI Taxonomy" id="332952"/>
    <lineage>
        <taxon>Eukaryota</taxon>
        <taxon>Fungi</taxon>
        <taxon>Dikarya</taxon>
        <taxon>Ascomycota</taxon>
        <taxon>Pezizomycotina</taxon>
        <taxon>Eurotiomycetes</taxon>
        <taxon>Eurotiomycetidae</taxon>
        <taxon>Eurotiales</taxon>
        <taxon>Aspergillaceae</taxon>
        <taxon>Aspergillus</taxon>
        <taxon>Aspergillus subgen. Circumdati</taxon>
    </lineage>
</organism>
<gene>
    <name type="primary">faeC</name>
    <name type="ORF">AFLA_105900</name>
</gene>
<sequence>MIKSIILQAIMVLSTLTSVHGANSSGCGKQPTLVNGVHKINDREYILKVPDNYNANKPHHLIFGLHWRGGNMNSVVNGESVEPWYGLETRAQGSAILVAPNGRNAGWANTNGEDVALIDAIIKQVEDDLCIDQSSRFATGFSWGGGMSYALACARAKEFRAVSVLSGGVISGCEGGHDPIAYLGIHGISDPVLPFDGGVTLANKFAANNGCQQAYVGKPGLGSHSSVQTDFKGCSRPVSFIAYDGGHDAAPLGVGNPLAPDATWKFFMAA</sequence>